<sequence>MGKYFGTDGVRGEANLELTPELAFKLGRFGGYVLSQHETEAPKVFVGRDTRISGEMLESALVAGLLSVGIHVYKLGVLATPAVAYLVETEGASAGVMIXASHNPALDNGIKFFGGDGFKLDDEKEAEIEALLDAEEDTLPXPSAEGLGILVDYPEGLRKYEGYLVSTGTPLDGMKVALDTANGAASTSARQIFADLGAQLTVIGETPDGLNINLNVGSTHPEALQEVVKESGSAIGLAFDGDSDRLIAVDENGDIVDGDKIMYIIGKYLSEKGQLAQNTIVTTVMSNLGFHKALNREGINKAVTAVGDRYVVEEMRKSGYNLGGEQSGHVILMDYNTTGDGQLSAVQLTKIMKETGKSLSELAAEVTIYPQKLVNIRVENVMKEKAMEVPAIKAIIEKMEEEMAGNGRILVRPSGTEPLLRVMAEAPTTEEVDYYVDTITDVVRAEIGID</sequence>
<comment type="function">
    <text evidence="1">Catalyzes the conversion of glucosamine-6-phosphate to glucosamine-1-phosphate.</text>
</comment>
<comment type="catalytic activity">
    <reaction evidence="1">
        <text>alpha-D-glucosamine 1-phosphate = D-glucosamine 6-phosphate</text>
        <dbReference type="Rhea" id="RHEA:23424"/>
        <dbReference type="ChEBI" id="CHEBI:58516"/>
        <dbReference type="ChEBI" id="CHEBI:58725"/>
        <dbReference type="EC" id="5.4.2.10"/>
    </reaction>
</comment>
<comment type="cofactor">
    <cofactor evidence="1">
        <name>Mg(2+)</name>
        <dbReference type="ChEBI" id="CHEBI:18420"/>
    </cofactor>
    <text evidence="1">Binds 1 Mg(2+) ion per subunit.</text>
</comment>
<comment type="PTM">
    <text evidence="1">Activated by phosphorylation.</text>
</comment>
<comment type="similarity">
    <text evidence="1">Belongs to the phosphohexose mutase family.</text>
</comment>
<gene>
    <name evidence="1" type="primary">glmM</name>
    <name type="ordered locus">SPG_1486</name>
</gene>
<organism>
    <name type="scientific">Streptococcus pneumoniae serotype 19F (strain G54)</name>
    <dbReference type="NCBI Taxonomy" id="512566"/>
    <lineage>
        <taxon>Bacteria</taxon>
        <taxon>Bacillati</taxon>
        <taxon>Bacillota</taxon>
        <taxon>Bacilli</taxon>
        <taxon>Lactobacillales</taxon>
        <taxon>Streptococcaceae</taxon>
        <taxon>Streptococcus</taxon>
    </lineage>
</organism>
<evidence type="ECO:0000255" key="1">
    <source>
        <dbReference type="HAMAP-Rule" id="MF_01554"/>
    </source>
</evidence>
<reference key="1">
    <citation type="journal article" date="2001" name="Microb. Drug Resist.">
        <title>Annotated draft genomic sequence from a Streptococcus pneumoniae type 19F clinical isolate.</title>
        <authorList>
            <person name="Dopazo J."/>
            <person name="Mendoza A."/>
            <person name="Herrero J."/>
            <person name="Caldara F."/>
            <person name="Humbert Y."/>
            <person name="Friedli L."/>
            <person name="Guerrier M."/>
            <person name="Grand-Schenk E."/>
            <person name="Gandin C."/>
            <person name="de Francesco M."/>
            <person name="Polissi A."/>
            <person name="Buell G."/>
            <person name="Feger G."/>
            <person name="Garcia E."/>
            <person name="Peitsch M."/>
            <person name="Garcia-Bustos J.F."/>
        </authorList>
    </citation>
    <scope>NUCLEOTIDE SEQUENCE [LARGE SCALE GENOMIC DNA]</scope>
    <source>
        <strain>G54</strain>
    </source>
</reference>
<reference key="2">
    <citation type="submission" date="2008-03" db="EMBL/GenBank/DDBJ databases">
        <title>Pneumococcal beta glucoside metabolism investigated by whole genome comparison.</title>
        <authorList>
            <person name="Mulas L."/>
            <person name="Trappetti C."/>
            <person name="Hakenbeck R."/>
            <person name="Iannelli F."/>
            <person name="Pozzi G."/>
            <person name="Davidsen T.M."/>
            <person name="Tettelin H."/>
            <person name="Oggioni M."/>
        </authorList>
    </citation>
    <scope>NUCLEOTIDE SEQUENCE [LARGE SCALE GENOMIC DNA]</scope>
    <source>
        <strain>G54</strain>
    </source>
</reference>
<name>GLMM_STRP4</name>
<feature type="chain" id="PRO_1000201148" description="Phosphoglucosamine mutase">
    <location>
        <begin position="1"/>
        <end position="450"/>
    </location>
</feature>
<feature type="active site" description="Phosphoserine intermediate" evidence="1">
    <location>
        <position position="101"/>
    </location>
</feature>
<feature type="binding site" description="via phosphate group" evidence="1">
    <location>
        <position position="101"/>
    </location>
    <ligand>
        <name>Mg(2+)</name>
        <dbReference type="ChEBI" id="CHEBI:18420"/>
    </ligand>
</feature>
<feature type="binding site" evidence="1">
    <location>
        <position position="240"/>
    </location>
    <ligand>
        <name>Mg(2+)</name>
        <dbReference type="ChEBI" id="CHEBI:18420"/>
    </ligand>
</feature>
<feature type="binding site" evidence="1">
    <location>
        <position position="242"/>
    </location>
    <ligand>
        <name>Mg(2+)</name>
        <dbReference type="ChEBI" id="CHEBI:18420"/>
    </ligand>
</feature>
<feature type="binding site" evidence="1">
    <location>
        <position position="244"/>
    </location>
    <ligand>
        <name>Mg(2+)</name>
        <dbReference type="ChEBI" id="CHEBI:18420"/>
    </ligand>
</feature>
<feature type="modified residue" description="Phosphoserine" evidence="1">
    <location>
        <position position="101"/>
    </location>
</feature>
<protein>
    <recommendedName>
        <fullName evidence="1">Phosphoglucosamine mutase</fullName>
        <ecNumber evidence="1">5.4.2.10</ecNumber>
    </recommendedName>
</protein>
<keyword id="KW-0413">Isomerase</keyword>
<keyword id="KW-0460">Magnesium</keyword>
<keyword id="KW-0479">Metal-binding</keyword>
<keyword id="KW-0597">Phosphoprotein</keyword>
<accession>B5E6K3</accession>
<proteinExistence type="inferred from homology"/>
<dbReference type="EC" id="5.4.2.10" evidence="1"/>
<dbReference type="EMBL" id="CP001015">
    <property type="protein sequence ID" value="ACF56599.1"/>
    <property type="molecule type" value="Genomic_DNA"/>
</dbReference>
<dbReference type="KEGG" id="spx:SPG_1486"/>
<dbReference type="HOGENOM" id="CLU_016950_7_0_9"/>
<dbReference type="GO" id="GO:0005829">
    <property type="term" value="C:cytosol"/>
    <property type="evidence" value="ECO:0007669"/>
    <property type="project" value="TreeGrafter"/>
</dbReference>
<dbReference type="GO" id="GO:0000287">
    <property type="term" value="F:magnesium ion binding"/>
    <property type="evidence" value="ECO:0007669"/>
    <property type="project" value="UniProtKB-UniRule"/>
</dbReference>
<dbReference type="GO" id="GO:0008966">
    <property type="term" value="F:phosphoglucosamine mutase activity"/>
    <property type="evidence" value="ECO:0007669"/>
    <property type="project" value="UniProtKB-UniRule"/>
</dbReference>
<dbReference type="GO" id="GO:0004615">
    <property type="term" value="F:phosphomannomutase activity"/>
    <property type="evidence" value="ECO:0007669"/>
    <property type="project" value="TreeGrafter"/>
</dbReference>
<dbReference type="GO" id="GO:0005975">
    <property type="term" value="P:carbohydrate metabolic process"/>
    <property type="evidence" value="ECO:0007669"/>
    <property type="project" value="InterPro"/>
</dbReference>
<dbReference type="GO" id="GO:0009252">
    <property type="term" value="P:peptidoglycan biosynthetic process"/>
    <property type="evidence" value="ECO:0007669"/>
    <property type="project" value="TreeGrafter"/>
</dbReference>
<dbReference type="GO" id="GO:0006048">
    <property type="term" value="P:UDP-N-acetylglucosamine biosynthetic process"/>
    <property type="evidence" value="ECO:0007669"/>
    <property type="project" value="TreeGrafter"/>
</dbReference>
<dbReference type="CDD" id="cd05802">
    <property type="entry name" value="GlmM"/>
    <property type="match status" value="1"/>
</dbReference>
<dbReference type="FunFam" id="3.30.310.50:FF:000001">
    <property type="entry name" value="Phosphoglucosamine mutase"/>
    <property type="match status" value="1"/>
</dbReference>
<dbReference type="FunFam" id="3.40.120.10:FF:000001">
    <property type="entry name" value="Phosphoglucosamine mutase"/>
    <property type="match status" value="1"/>
</dbReference>
<dbReference type="FunFam" id="3.40.120.10:FF:000002">
    <property type="entry name" value="Phosphoglucosamine mutase"/>
    <property type="match status" value="1"/>
</dbReference>
<dbReference type="Gene3D" id="3.40.120.10">
    <property type="entry name" value="Alpha-D-Glucose-1,6-Bisphosphate, subunit A, domain 3"/>
    <property type="match status" value="3"/>
</dbReference>
<dbReference type="Gene3D" id="3.30.310.50">
    <property type="entry name" value="Alpha-D-phosphohexomutase, C-terminal domain"/>
    <property type="match status" value="1"/>
</dbReference>
<dbReference type="HAMAP" id="MF_01554_B">
    <property type="entry name" value="GlmM_B"/>
    <property type="match status" value="1"/>
</dbReference>
<dbReference type="InterPro" id="IPR005844">
    <property type="entry name" value="A-D-PHexomutase_a/b/a-I"/>
</dbReference>
<dbReference type="InterPro" id="IPR016055">
    <property type="entry name" value="A-D-PHexomutase_a/b/a-I/II/III"/>
</dbReference>
<dbReference type="InterPro" id="IPR005845">
    <property type="entry name" value="A-D-PHexomutase_a/b/a-II"/>
</dbReference>
<dbReference type="InterPro" id="IPR005846">
    <property type="entry name" value="A-D-PHexomutase_a/b/a-III"/>
</dbReference>
<dbReference type="InterPro" id="IPR005843">
    <property type="entry name" value="A-D-PHexomutase_C"/>
</dbReference>
<dbReference type="InterPro" id="IPR036900">
    <property type="entry name" value="A-D-PHexomutase_C_sf"/>
</dbReference>
<dbReference type="InterPro" id="IPR005841">
    <property type="entry name" value="Alpha-D-phosphohexomutase_SF"/>
</dbReference>
<dbReference type="InterPro" id="IPR006352">
    <property type="entry name" value="GlmM_bact"/>
</dbReference>
<dbReference type="InterPro" id="IPR050060">
    <property type="entry name" value="Phosphoglucosamine_mutase"/>
</dbReference>
<dbReference type="NCBIfam" id="TIGR01455">
    <property type="entry name" value="glmM"/>
    <property type="match status" value="1"/>
</dbReference>
<dbReference type="PANTHER" id="PTHR42946:SF1">
    <property type="entry name" value="PHOSPHOGLUCOMUTASE (ALPHA-D-GLUCOSE-1,6-BISPHOSPHATE-DEPENDENT)"/>
    <property type="match status" value="1"/>
</dbReference>
<dbReference type="PANTHER" id="PTHR42946">
    <property type="entry name" value="PHOSPHOHEXOSE MUTASE"/>
    <property type="match status" value="1"/>
</dbReference>
<dbReference type="Pfam" id="PF02878">
    <property type="entry name" value="PGM_PMM_I"/>
    <property type="match status" value="1"/>
</dbReference>
<dbReference type="Pfam" id="PF02879">
    <property type="entry name" value="PGM_PMM_II"/>
    <property type="match status" value="1"/>
</dbReference>
<dbReference type="Pfam" id="PF02880">
    <property type="entry name" value="PGM_PMM_III"/>
    <property type="match status" value="1"/>
</dbReference>
<dbReference type="Pfam" id="PF00408">
    <property type="entry name" value="PGM_PMM_IV"/>
    <property type="match status" value="1"/>
</dbReference>
<dbReference type="PRINTS" id="PR00509">
    <property type="entry name" value="PGMPMM"/>
</dbReference>
<dbReference type="SUPFAM" id="SSF55957">
    <property type="entry name" value="Phosphoglucomutase, C-terminal domain"/>
    <property type="match status" value="1"/>
</dbReference>
<dbReference type="SUPFAM" id="SSF53738">
    <property type="entry name" value="Phosphoglucomutase, first 3 domains"/>
    <property type="match status" value="3"/>
</dbReference>